<reference key="1">
    <citation type="journal article" date="2012" name="BMC Genomics">
        <title>Comparative genomics and transcriptomics of lineages I, II, and III strains of Listeria monocytogenes.</title>
        <authorList>
            <person name="Hain T."/>
            <person name="Ghai R."/>
            <person name="Billion A."/>
            <person name="Kuenne C.T."/>
            <person name="Steinweg C."/>
            <person name="Izar B."/>
            <person name="Mohamed W."/>
            <person name="Mraheil M."/>
            <person name="Domann E."/>
            <person name="Schaffrath S."/>
            <person name="Karst U."/>
            <person name="Goesmann A."/>
            <person name="Oehm S."/>
            <person name="Puhler A."/>
            <person name="Merkl R."/>
            <person name="Vorwerk S."/>
            <person name="Glaser P."/>
            <person name="Garrido P."/>
            <person name="Rusniok C."/>
            <person name="Buchrieser C."/>
            <person name="Goebel W."/>
            <person name="Chakraborty T."/>
        </authorList>
    </citation>
    <scope>NUCLEOTIDE SEQUENCE [LARGE SCALE GENOMIC DNA]</scope>
    <source>
        <strain>CLIP80459</strain>
    </source>
</reference>
<feature type="chain" id="PRO_1000212460" description="Ribosomal RNA large subunit methyltransferase H">
    <location>
        <begin position="1"/>
        <end position="159"/>
    </location>
</feature>
<feature type="binding site" evidence="1">
    <location>
        <position position="76"/>
    </location>
    <ligand>
        <name>S-adenosyl-L-methionine</name>
        <dbReference type="ChEBI" id="CHEBI:59789"/>
    </ligand>
</feature>
<feature type="binding site" evidence="1">
    <location>
        <position position="108"/>
    </location>
    <ligand>
        <name>S-adenosyl-L-methionine</name>
        <dbReference type="ChEBI" id="CHEBI:59789"/>
    </ligand>
</feature>
<feature type="binding site" evidence="1">
    <location>
        <begin position="127"/>
        <end position="132"/>
    </location>
    <ligand>
        <name>S-adenosyl-L-methionine</name>
        <dbReference type="ChEBI" id="CHEBI:59789"/>
    </ligand>
</feature>
<proteinExistence type="inferred from homology"/>
<evidence type="ECO:0000255" key="1">
    <source>
        <dbReference type="HAMAP-Rule" id="MF_00658"/>
    </source>
</evidence>
<dbReference type="EC" id="2.1.1.177" evidence="1"/>
<dbReference type="EMBL" id="FM242711">
    <property type="protein sequence ID" value="CAS04088.1"/>
    <property type="molecule type" value="Genomic_DNA"/>
</dbReference>
<dbReference type="RefSeq" id="WP_003722913.1">
    <property type="nucleotide sequence ID" value="NC_012488.1"/>
</dbReference>
<dbReference type="SMR" id="C1KZ18"/>
<dbReference type="KEGG" id="lmc:Lm4b_00321"/>
<dbReference type="HOGENOM" id="CLU_100552_0_0_9"/>
<dbReference type="GO" id="GO:0005737">
    <property type="term" value="C:cytoplasm"/>
    <property type="evidence" value="ECO:0007669"/>
    <property type="project" value="UniProtKB-SubCell"/>
</dbReference>
<dbReference type="GO" id="GO:0070038">
    <property type="term" value="F:rRNA (pseudouridine-N3-)-methyltransferase activity"/>
    <property type="evidence" value="ECO:0007669"/>
    <property type="project" value="UniProtKB-UniRule"/>
</dbReference>
<dbReference type="CDD" id="cd18081">
    <property type="entry name" value="RlmH-like"/>
    <property type="match status" value="1"/>
</dbReference>
<dbReference type="Gene3D" id="3.40.1280.10">
    <property type="match status" value="1"/>
</dbReference>
<dbReference type="HAMAP" id="MF_00658">
    <property type="entry name" value="23SrRNA_methyltr_H"/>
    <property type="match status" value="1"/>
</dbReference>
<dbReference type="InterPro" id="IPR029028">
    <property type="entry name" value="Alpha/beta_knot_MTases"/>
</dbReference>
<dbReference type="InterPro" id="IPR003742">
    <property type="entry name" value="RlmH-like"/>
</dbReference>
<dbReference type="InterPro" id="IPR029026">
    <property type="entry name" value="tRNA_m1G_MTases_N"/>
</dbReference>
<dbReference type="NCBIfam" id="NF000985">
    <property type="entry name" value="PRK00103.1-3"/>
    <property type="match status" value="1"/>
</dbReference>
<dbReference type="NCBIfam" id="TIGR00246">
    <property type="entry name" value="tRNA_RlmH_YbeA"/>
    <property type="match status" value="1"/>
</dbReference>
<dbReference type="PANTHER" id="PTHR33603">
    <property type="entry name" value="METHYLTRANSFERASE"/>
    <property type="match status" value="1"/>
</dbReference>
<dbReference type="PANTHER" id="PTHR33603:SF1">
    <property type="entry name" value="RIBOSOMAL RNA LARGE SUBUNIT METHYLTRANSFERASE H"/>
    <property type="match status" value="1"/>
</dbReference>
<dbReference type="Pfam" id="PF02590">
    <property type="entry name" value="SPOUT_MTase"/>
    <property type="match status" value="1"/>
</dbReference>
<dbReference type="PIRSF" id="PIRSF004505">
    <property type="entry name" value="MT_bac"/>
    <property type="match status" value="1"/>
</dbReference>
<dbReference type="SUPFAM" id="SSF75217">
    <property type="entry name" value="alpha/beta knot"/>
    <property type="match status" value="1"/>
</dbReference>
<accession>C1KZ18</accession>
<gene>
    <name evidence="1" type="primary">rlmH</name>
    <name type="ordered locus">Lm4b_00321</name>
</gene>
<sequence length="159" mass="17741">MNIQIVTVGKLKEKYLVQGIAEYLKRLSAYAKVTIVEVPDEKAPEVLSDAEMKQVKDKEGARILAKIPDDAHVIALAIDGKMKSSEEFAADLDKLATYGKSKVTFVIGGSLGLSEAVLKRSNERISFGRLTLPHQLMRLVLVEQVYRAFRIVRGEPYHK</sequence>
<comment type="function">
    <text evidence="1">Specifically methylates the pseudouridine at position 1915 (m3Psi1915) in 23S rRNA.</text>
</comment>
<comment type="catalytic activity">
    <reaction evidence="1">
        <text>pseudouridine(1915) in 23S rRNA + S-adenosyl-L-methionine = N(3)-methylpseudouridine(1915) in 23S rRNA + S-adenosyl-L-homocysteine + H(+)</text>
        <dbReference type="Rhea" id="RHEA:42752"/>
        <dbReference type="Rhea" id="RHEA-COMP:10221"/>
        <dbReference type="Rhea" id="RHEA-COMP:10222"/>
        <dbReference type="ChEBI" id="CHEBI:15378"/>
        <dbReference type="ChEBI" id="CHEBI:57856"/>
        <dbReference type="ChEBI" id="CHEBI:59789"/>
        <dbReference type="ChEBI" id="CHEBI:65314"/>
        <dbReference type="ChEBI" id="CHEBI:74486"/>
        <dbReference type="EC" id="2.1.1.177"/>
    </reaction>
</comment>
<comment type="subunit">
    <text evidence="1">Homodimer.</text>
</comment>
<comment type="subcellular location">
    <subcellularLocation>
        <location evidence="1">Cytoplasm</location>
    </subcellularLocation>
</comment>
<comment type="similarity">
    <text evidence="1">Belongs to the RNA methyltransferase RlmH family.</text>
</comment>
<protein>
    <recommendedName>
        <fullName evidence="1">Ribosomal RNA large subunit methyltransferase H</fullName>
        <ecNumber evidence="1">2.1.1.177</ecNumber>
    </recommendedName>
    <alternativeName>
        <fullName evidence="1">23S rRNA (pseudouridine1915-N3)-methyltransferase</fullName>
    </alternativeName>
    <alternativeName>
        <fullName evidence="1">23S rRNA m3Psi1915 methyltransferase</fullName>
    </alternativeName>
    <alternativeName>
        <fullName evidence="1">rRNA (pseudouridine-N3-)-methyltransferase RlmH</fullName>
    </alternativeName>
</protein>
<organism>
    <name type="scientific">Listeria monocytogenes serotype 4b (strain CLIP80459)</name>
    <dbReference type="NCBI Taxonomy" id="568819"/>
    <lineage>
        <taxon>Bacteria</taxon>
        <taxon>Bacillati</taxon>
        <taxon>Bacillota</taxon>
        <taxon>Bacilli</taxon>
        <taxon>Bacillales</taxon>
        <taxon>Listeriaceae</taxon>
        <taxon>Listeria</taxon>
    </lineage>
</organism>
<name>RLMH_LISMC</name>
<keyword id="KW-0963">Cytoplasm</keyword>
<keyword id="KW-0489">Methyltransferase</keyword>
<keyword id="KW-0698">rRNA processing</keyword>
<keyword id="KW-0949">S-adenosyl-L-methionine</keyword>
<keyword id="KW-0808">Transferase</keyword>